<dbReference type="EC" id="3.2.2.-" evidence="1"/>
<dbReference type="EMBL" id="CP000094">
    <property type="protein sequence ID" value="ABA76712.1"/>
    <property type="molecule type" value="Genomic_DNA"/>
</dbReference>
<dbReference type="RefSeq" id="WP_011336104.1">
    <property type="nucleotide sequence ID" value="NC_007492.2"/>
</dbReference>
<dbReference type="SMR" id="Q3K692"/>
<dbReference type="KEGG" id="pfo:Pfl01_4975"/>
<dbReference type="eggNOG" id="COG2094">
    <property type="taxonomic scope" value="Bacteria"/>
</dbReference>
<dbReference type="HOGENOM" id="CLU_104187_0_0_6"/>
<dbReference type="Proteomes" id="UP000002704">
    <property type="component" value="Chromosome"/>
</dbReference>
<dbReference type="GO" id="GO:0003905">
    <property type="term" value="F:alkylbase DNA N-glycosylase activity"/>
    <property type="evidence" value="ECO:0007669"/>
    <property type="project" value="InterPro"/>
</dbReference>
<dbReference type="GO" id="GO:0003677">
    <property type="term" value="F:DNA binding"/>
    <property type="evidence" value="ECO:0007669"/>
    <property type="project" value="InterPro"/>
</dbReference>
<dbReference type="GO" id="GO:0006284">
    <property type="term" value="P:base-excision repair"/>
    <property type="evidence" value="ECO:0007669"/>
    <property type="project" value="InterPro"/>
</dbReference>
<dbReference type="Gene3D" id="3.10.300.10">
    <property type="entry name" value="Methylpurine-DNA glycosylase (MPG)"/>
    <property type="match status" value="1"/>
</dbReference>
<dbReference type="HAMAP" id="MF_00527">
    <property type="entry name" value="3MGH"/>
    <property type="match status" value="1"/>
</dbReference>
<dbReference type="InterPro" id="IPR011034">
    <property type="entry name" value="Formyl_transferase-like_C_sf"/>
</dbReference>
<dbReference type="InterPro" id="IPR003180">
    <property type="entry name" value="MPG"/>
</dbReference>
<dbReference type="InterPro" id="IPR036995">
    <property type="entry name" value="MPG_sf"/>
</dbReference>
<dbReference type="NCBIfam" id="NF002005">
    <property type="entry name" value="PRK00802.1-5"/>
    <property type="match status" value="1"/>
</dbReference>
<dbReference type="PANTHER" id="PTHR10429">
    <property type="entry name" value="DNA-3-METHYLADENINE GLYCOSYLASE"/>
    <property type="match status" value="1"/>
</dbReference>
<dbReference type="PANTHER" id="PTHR10429:SF0">
    <property type="entry name" value="DNA-3-METHYLADENINE GLYCOSYLASE"/>
    <property type="match status" value="1"/>
</dbReference>
<dbReference type="Pfam" id="PF02245">
    <property type="entry name" value="Pur_DNA_glyco"/>
    <property type="match status" value="1"/>
</dbReference>
<dbReference type="SUPFAM" id="SSF50486">
    <property type="entry name" value="FMT C-terminal domain-like"/>
    <property type="match status" value="1"/>
</dbReference>
<proteinExistence type="inferred from homology"/>
<reference key="1">
    <citation type="journal article" date="2009" name="Genome Biol.">
        <title>Genomic and genetic analyses of diversity and plant interactions of Pseudomonas fluorescens.</title>
        <authorList>
            <person name="Silby M.W."/>
            <person name="Cerdeno-Tarraga A.M."/>
            <person name="Vernikos G.S."/>
            <person name="Giddens S.R."/>
            <person name="Jackson R.W."/>
            <person name="Preston G.M."/>
            <person name="Zhang X.-X."/>
            <person name="Moon C.D."/>
            <person name="Gehrig S.M."/>
            <person name="Godfrey S.A.C."/>
            <person name="Knight C.G."/>
            <person name="Malone J.G."/>
            <person name="Robinson Z."/>
            <person name="Spiers A.J."/>
            <person name="Harris S."/>
            <person name="Challis G.L."/>
            <person name="Yaxley A.M."/>
            <person name="Harris D."/>
            <person name="Seeger K."/>
            <person name="Murphy L."/>
            <person name="Rutter S."/>
            <person name="Squares R."/>
            <person name="Quail M.A."/>
            <person name="Saunders E."/>
            <person name="Mavromatis K."/>
            <person name="Brettin T.S."/>
            <person name="Bentley S.D."/>
            <person name="Hothersall J."/>
            <person name="Stephens E."/>
            <person name="Thomas C.M."/>
            <person name="Parkhill J."/>
            <person name="Levy S.B."/>
            <person name="Rainey P.B."/>
            <person name="Thomson N.R."/>
        </authorList>
    </citation>
    <scope>NUCLEOTIDE SEQUENCE [LARGE SCALE GENOMIC DNA]</scope>
    <source>
        <strain>Pf0-1</strain>
    </source>
</reference>
<comment type="similarity">
    <text evidence="1">Belongs to the DNA glycosylase MPG family.</text>
</comment>
<protein>
    <recommendedName>
        <fullName evidence="1">Putative 3-methyladenine DNA glycosylase</fullName>
        <ecNumber evidence="1">3.2.2.-</ecNumber>
    </recommendedName>
</protein>
<evidence type="ECO:0000255" key="1">
    <source>
        <dbReference type="HAMAP-Rule" id="MF_00527"/>
    </source>
</evidence>
<organism>
    <name type="scientific">Pseudomonas fluorescens (strain Pf0-1)</name>
    <dbReference type="NCBI Taxonomy" id="205922"/>
    <lineage>
        <taxon>Bacteria</taxon>
        <taxon>Pseudomonadati</taxon>
        <taxon>Pseudomonadota</taxon>
        <taxon>Gammaproteobacteria</taxon>
        <taxon>Pseudomonadales</taxon>
        <taxon>Pseudomonadaceae</taxon>
        <taxon>Pseudomonas</taxon>
    </lineage>
</organism>
<keyword id="KW-0227">DNA damage</keyword>
<keyword id="KW-0234">DNA repair</keyword>
<keyword id="KW-0378">Hydrolase</keyword>
<feature type="chain" id="PRO_1000211763" description="Putative 3-methyladenine DNA glycosylase">
    <location>
        <begin position="1"/>
        <end position="231"/>
    </location>
</feature>
<name>3MGH_PSEPF</name>
<accession>Q3K692</accession>
<sequence length="231" mass="25802">MSNLTVRATSTRQPVGLADAFFDRDAQTLARDLLGKVIRHRVGDLWLSARIIETEAYYCEEKGSHASLGYTEKRKALFLDGGHIYMYYARGGDSLNFSAQGPGNAVLIKSAYPWVDEISGPASLAQMLLNNPDAQGRPRPSQKLCAGQTLLCKALGLKVPVWDAKRFDHEILLVEDTGPAPTHVIQTTRLGIPHGRDEHLMYRFVDAAYAQWCTRNPLRRGQVEGRDYFLL</sequence>
<gene>
    <name type="ordered locus">Pfl01_4975</name>
</gene>